<gene>
    <name type="primary">C8orf58</name>
</gene>
<name>CH058_HUMAN</name>
<comment type="alternative products">
    <event type="alternative splicing"/>
    <isoform>
        <id>Q8NAV2-1</id>
        <name>1</name>
        <sequence type="displayed"/>
    </isoform>
    <isoform>
        <id>Q8NAV2-2</id>
        <name>2</name>
        <sequence type="described" ref="VSP_024876"/>
    </isoform>
</comment>
<comment type="sequence caution" evidence="3">
    <conflict type="erroneous initiation">
        <sequence resource="EMBL-CDS" id="BAC03795"/>
    </conflict>
</comment>
<protein>
    <recommendedName>
        <fullName>Uncharacterized protein C8orf58</fullName>
    </recommendedName>
</protein>
<organism>
    <name type="scientific">Homo sapiens</name>
    <name type="common">Human</name>
    <dbReference type="NCBI Taxonomy" id="9606"/>
    <lineage>
        <taxon>Eukaryota</taxon>
        <taxon>Metazoa</taxon>
        <taxon>Chordata</taxon>
        <taxon>Craniata</taxon>
        <taxon>Vertebrata</taxon>
        <taxon>Euteleostomi</taxon>
        <taxon>Mammalia</taxon>
        <taxon>Eutheria</taxon>
        <taxon>Euarchontoglires</taxon>
        <taxon>Primates</taxon>
        <taxon>Haplorrhini</taxon>
        <taxon>Catarrhini</taxon>
        <taxon>Hominidae</taxon>
        <taxon>Homo</taxon>
    </lineage>
</organism>
<accession>Q8NAV2</accession>
<accession>B4DI44</accession>
<sequence length="365" mass="39661">MMGRRRAFAVDGRDGAGEGLARGCIVPGVTSTYRRIPDAAHGCSSWERGDKFRGVGREALFLKLASRDSGVEMAVGDSPLAALPGLSQDSLDFESSGSSEPPAQVGRLLASQKLGEVLERSRRLPTAPTSLSGQHRSLRLASKPEREVPLGAGQQESMEADTDLEAGLEEEAVGGLGPGAWACLPGQGLRYLEHLCLVLEQMARLQQLYLQLRIQRPPGDPGEEESTRAPLPSPLHTPGNRGQGPWELLSQTEHTGAKAASPPKVEVPSANPPRLPETPVEPTYHLPSSQGHKRDISHWDKVKVLLNRICRRSHHHPEPPAPPDGSDPRIESRDLPERPQCRPHRKTFMPSLVVKKQRAKNLSVG</sequence>
<evidence type="ECO:0000256" key="1">
    <source>
        <dbReference type="SAM" id="MobiDB-lite"/>
    </source>
</evidence>
<evidence type="ECO:0000303" key="2">
    <source>
    </source>
</evidence>
<evidence type="ECO:0000305" key="3"/>
<keyword id="KW-0025">Alternative splicing</keyword>
<keyword id="KW-1267">Proteomics identification</keyword>
<keyword id="KW-1185">Reference proteome</keyword>
<reference key="1">
    <citation type="submission" date="2004-07" db="EMBL/GenBank/DDBJ databases">
        <title>Full-length cDNA libraries and normalization.</title>
        <authorList>
            <person name="Li W.B."/>
            <person name="Gruber C."/>
            <person name="Jessee J."/>
            <person name="Polayes D."/>
        </authorList>
    </citation>
    <scope>NUCLEOTIDE SEQUENCE [LARGE SCALE MRNA] (ISOFORM 1)</scope>
    <source>
        <tissue>Neuroblastoma</tissue>
    </source>
</reference>
<reference key="2">
    <citation type="journal article" date="2004" name="Nat. Genet.">
        <title>Complete sequencing and characterization of 21,243 full-length human cDNAs.</title>
        <authorList>
            <person name="Ota T."/>
            <person name="Suzuki Y."/>
            <person name="Nishikawa T."/>
            <person name="Otsuki T."/>
            <person name="Sugiyama T."/>
            <person name="Irie R."/>
            <person name="Wakamatsu A."/>
            <person name="Hayashi K."/>
            <person name="Sato H."/>
            <person name="Nagai K."/>
            <person name="Kimura K."/>
            <person name="Makita H."/>
            <person name="Sekine M."/>
            <person name="Obayashi M."/>
            <person name="Nishi T."/>
            <person name="Shibahara T."/>
            <person name="Tanaka T."/>
            <person name="Ishii S."/>
            <person name="Yamamoto J."/>
            <person name="Saito K."/>
            <person name="Kawai Y."/>
            <person name="Isono Y."/>
            <person name="Nakamura Y."/>
            <person name="Nagahari K."/>
            <person name="Murakami K."/>
            <person name="Yasuda T."/>
            <person name="Iwayanagi T."/>
            <person name="Wagatsuma M."/>
            <person name="Shiratori A."/>
            <person name="Sudo H."/>
            <person name="Hosoiri T."/>
            <person name="Kaku Y."/>
            <person name="Kodaira H."/>
            <person name="Kondo H."/>
            <person name="Sugawara M."/>
            <person name="Takahashi M."/>
            <person name="Kanda K."/>
            <person name="Yokoi T."/>
            <person name="Furuya T."/>
            <person name="Kikkawa E."/>
            <person name="Omura Y."/>
            <person name="Abe K."/>
            <person name="Kamihara K."/>
            <person name="Katsuta N."/>
            <person name="Sato K."/>
            <person name="Tanikawa M."/>
            <person name="Yamazaki M."/>
            <person name="Ninomiya K."/>
            <person name="Ishibashi T."/>
            <person name="Yamashita H."/>
            <person name="Murakawa K."/>
            <person name="Fujimori K."/>
            <person name="Tanai H."/>
            <person name="Kimata M."/>
            <person name="Watanabe M."/>
            <person name="Hiraoka S."/>
            <person name="Chiba Y."/>
            <person name="Ishida S."/>
            <person name="Ono Y."/>
            <person name="Takiguchi S."/>
            <person name="Watanabe S."/>
            <person name="Yosida M."/>
            <person name="Hotuta T."/>
            <person name="Kusano J."/>
            <person name="Kanehori K."/>
            <person name="Takahashi-Fujii A."/>
            <person name="Hara H."/>
            <person name="Tanase T.-O."/>
            <person name="Nomura Y."/>
            <person name="Togiya S."/>
            <person name="Komai F."/>
            <person name="Hara R."/>
            <person name="Takeuchi K."/>
            <person name="Arita M."/>
            <person name="Imose N."/>
            <person name="Musashino K."/>
            <person name="Yuuki H."/>
            <person name="Oshima A."/>
            <person name="Sasaki N."/>
            <person name="Aotsuka S."/>
            <person name="Yoshikawa Y."/>
            <person name="Matsunawa H."/>
            <person name="Ichihara T."/>
            <person name="Shiohata N."/>
            <person name="Sano S."/>
            <person name="Moriya S."/>
            <person name="Momiyama H."/>
            <person name="Satoh N."/>
            <person name="Takami S."/>
            <person name="Terashima Y."/>
            <person name="Suzuki O."/>
            <person name="Nakagawa S."/>
            <person name="Senoh A."/>
            <person name="Mizoguchi H."/>
            <person name="Goto Y."/>
            <person name="Shimizu F."/>
            <person name="Wakebe H."/>
            <person name="Hishigaki H."/>
            <person name="Watanabe T."/>
            <person name="Sugiyama A."/>
            <person name="Takemoto M."/>
            <person name="Kawakami B."/>
            <person name="Yamazaki M."/>
            <person name="Watanabe K."/>
            <person name="Kumagai A."/>
            <person name="Itakura S."/>
            <person name="Fukuzumi Y."/>
            <person name="Fujimori Y."/>
            <person name="Komiyama M."/>
            <person name="Tashiro H."/>
            <person name="Tanigami A."/>
            <person name="Fujiwara T."/>
            <person name="Ono T."/>
            <person name="Yamada K."/>
            <person name="Fujii Y."/>
            <person name="Ozaki K."/>
            <person name="Hirao M."/>
            <person name="Ohmori Y."/>
            <person name="Kawabata A."/>
            <person name="Hikiji T."/>
            <person name="Kobatake N."/>
            <person name="Inagaki H."/>
            <person name="Ikema Y."/>
            <person name="Okamoto S."/>
            <person name="Okitani R."/>
            <person name="Kawakami T."/>
            <person name="Noguchi S."/>
            <person name="Itoh T."/>
            <person name="Shigeta K."/>
            <person name="Senba T."/>
            <person name="Matsumura K."/>
            <person name="Nakajima Y."/>
            <person name="Mizuno T."/>
            <person name="Morinaga M."/>
            <person name="Sasaki M."/>
            <person name="Togashi T."/>
            <person name="Oyama M."/>
            <person name="Hata H."/>
            <person name="Watanabe M."/>
            <person name="Komatsu T."/>
            <person name="Mizushima-Sugano J."/>
            <person name="Satoh T."/>
            <person name="Shirai Y."/>
            <person name="Takahashi Y."/>
            <person name="Nakagawa K."/>
            <person name="Okumura K."/>
            <person name="Nagase T."/>
            <person name="Nomura N."/>
            <person name="Kikuchi H."/>
            <person name="Masuho Y."/>
            <person name="Yamashita R."/>
            <person name="Nakai K."/>
            <person name="Yada T."/>
            <person name="Nakamura Y."/>
            <person name="Ohara O."/>
            <person name="Isogai T."/>
            <person name="Sugano S."/>
        </authorList>
    </citation>
    <scope>NUCLEOTIDE SEQUENCE [LARGE SCALE MRNA] (ISOFORM 2)</scope>
    <source>
        <tissue>Corpus callosum</tissue>
        <tissue>Mesangial cell</tissue>
    </source>
</reference>
<dbReference type="EMBL" id="CR608004">
    <property type="status" value="NOT_ANNOTATED_CDS"/>
    <property type="molecule type" value="mRNA"/>
</dbReference>
<dbReference type="EMBL" id="AK092034">
    <property type="protein sequence ID" value="BAC03795.1"/>
    <property type="status" value="ALT_INIT"/>
    <property type="molecule type" value="mRNA"/>
</dbReference>
<dbReference type="EMBL" id="AK295405">
    <property type="protein sequence ID" value="BAG58356.1"/>
    <property type="molecule type" value="mRNA"/>
</dbReference>
<dbReference type="CCDS" id="CCDS34862.1">
    <molecule id="Q8NAV2-1"/>
</dbReference>
<dbReference type="CCDS" id="CCDS56527.1">
    <molecule id="Q8NAV2-2"/>
</dbReference>
<dbReference type="RefSeq" id="NP_001013864.1">
    <molecule id="Q8NAV2-1"/>
    <property type="nucleotide sequence ID" value="NM_001013842.3"/>
</dbReference>
<dbReference type="RefSeq" id="NP_775957.2">
    <molecule id="Q8NAV2-2"/>
    <property type="nucleotide sequence ID" value="NM_173686.2"/>
</dbReference>
<dbReference type="BioGRID" id="139076">
    <property type="interactions" value="3"/>
</dbReference>
<dbReference type="FunCoup" id="Q8NAV2">
    <property type="interactions" value="12"/>
</dbReference>
<dbReference type="IntAct" id="Q8NAV2">
    <property type="interactions" value="3"/>
</dbReference>
<dbReference type="STRING" id="9606.ENSP00000289989"/>
<dbReference type="GlyGen" id="Q8NAV2">
    <property type="glycosylation" value="1 site, 1 O-linked glycan (1 site)"/>
</dbReference>
<dbReference type="iPTMnet" id="Q8NAV2"/>
<dbReference type="PhosphoSitePlus" id="Q8NAV2"/>
<dbReference type="BioMuta" id="C8orf58"/>
<dbReference type="DMDM" id="146286069"/>
<dbReference type="jPOST" id="Q8NAV2"/>
<dbReference type="MassIVE" id="Q8NAV2"/>
<dbReference type="PaxDb" id="9606-ENSP00000289989"/>
<dbReference type="PeptideAtlas" id="Q8NAV2"/>
<dbReference type="ProteomicsDB" id="72708">
    <molecule id="Q8NAV2-1"/>
</dbReference>
<dbReference type="ProteomicsDB" id="72709">
    <molecule id="Q8NAV2-2"/>
</dbReference>
<dbReference type="Antibodypedia" id="34991">
    <property type="antibodies" value="57 antibodies from 11 providers"/>
</dbReference>
<dbReference type="DNASU" id="541565"/>
<dbReference type="Ensembl" id="ENST00000289989.10">
    <molecule id="Q8NAV2-1"/>
    <property type="protein sequence ID" value="ENSP00000289989.5"/>
    <property type="gene ID" value="ENSG00000241852.11"/>
</dbReference>
<dbReference type="Ensembl" id="ENST00000409586.7">
    <molecule id="Q8NAV2-2"/>
    <property type="protein sequence ID" value="ENSP00000386265.3"/>
    <property type="gene ID" value="ENSG00000241852.11"/>
</dbReference>
<dbReference type="GeneID" id="541565"/>
<dbReference type="KEGG" id="hsa:541565"/>
<dbReference type="MANE-Select" id="ENST00000289989.10">
    <property type="protein sequence ID" value="ENSP00000289989.5"/>
    <property type="RefSeq nucleotide sequence ID" value="NM_001013842.3"/>
    <property type="RefSeq protein sequence ID" value="NP_001013864.1"/>
</dbReference>
<dbReference type="UCSC" id="uc003xce.4">
    <molecule id="Q8NAV2-1"/>
    <property type="organism name" value="human"/>
</dbReference>
<dbReference type="AGR" id="HGNC:32233"/>
<dbReference type="CTD" id="541565"/>
<dbReference type="DisGeNET" id="541565"/>
<dbReference type="GeneCards" id="C8orf58"/>
<dbReference type="HGNC" id="HGNC:32233">
    <property type="gene designation" value="C8orf58"/>
</dbReference>
<dbReference type="HPA" id="ENSG00000241852">
    <property type="expression patterns" value="Low tissue specificity"/>
</dbReference>
<dbReference type="neXtProt" id="NX_Q8NAV2"/>
<dbReference type="OpenTargets" id="ENSG00000241852"/>
<dbReference type="PharmGKB" id="PA142672321"/>
<dbReference type="VEuPathDB" id="HostDB:ENSG00000241852"/>
<dbReference type="eggNOG" id="ENOG502RG07">
    <property type="taxonomic scope" value="Eukaryota"/>
</dbReference>
<dbReference type="GeneTree" id="ENSGT00390000000531"/>
<dbReference type="HOGENOM" id="CLU_067480_0_0_1"/>
<dbReference type="InParanoid" id="Q8NAV2"/>
<dbReference type="OMA" id="IRWRSPK"/>
<dbReference type="OrthoDB" id="9943553at2759"/>
<dbReference type="PAN-GO" id="Q8NAV2">
    <property type="GO annotations" value="0 GO annotations based on evolutionary models"/>
</dbReference>
<dbReference type="PhylomeDB" id="Q8NAV2"/>
<dbReference type="TreeFam" id="TF337357"/>
<dbReference type="PathwayCommons" id="Q8NAV2"/>
<dbReference type="SignaLink" id="Q8NAV2"/>
<dbReference type="BioGRID-ORCS" id="541565">
    <property type="hits" value="14 hits in 1148 CRISPR screens"/>
</dbReference>
<dbReference type="ChiTaRS" id="C8orf58">
    <property type="organism name" value="human"/>
</dbReference>
<dbReference type="GenomeRNAi" id="541565"/>
<dbReference type="Pharos" id="Q8NAV2">
    <property type="development level" value="Tdark"/>
</dbReference>
<dbReference type="PRO" id="PR:Q8NAV2"/>
<dbReference type="Proteomes" id="UP000005640">
    <property type="component" value="Chromosome 8"/>
</dbReference>
<dbReference type="RNAct" id="Q8NAV2">
    <property type="molecule type" value="protein"/>
</dbReference>
<dbReference type="Bgee" id="ENSG00000241852">
    <property type="expression patterns" value="Expressed in male germ line stem cell (sensu Vertebrata) in testis and 118 other cell types or tissues"/>
</dbReference>
<dbReference type="ExpressionAtlas" id="Q8NAV2">
    <property type="expression patterns" value="baseline and differential"/>
</dbReference>
<dbReference type="InterPro" id="IPR027958">
    <property type="entry name" value="DUF4657"/>
</dbReference>
<dbReference type="PANTHER" id="PTHR37336">
    <property type="entry name" value="SIMILAR TO 9930012K11RIK PROTEIN"/>
    <property type="match status" value="1"/>
</dbReference>
<dbReference type="PANTHER" id="PTHR37336:SF1">
    <property type="entry name" value="SIMILAR TO 9930012K11RIK PROTEIN"/>
    <property type="match status" value="1"/>
</dbReference>
<dbReference type="Pfam" id="PF15552">
    <property type="entry name" value="DUF4657"/>
    <property type="match status" value="1"/>
</dbReference>
<feature type="chain" id="PRO_0000285640" description="Uncharacterized protein C8orf58">
    <location>
        <begin position="1"/>
        <end position="365"/>
    </location>
</feature>
<feature type="region of interest" description="Disordered" evidence="1">
    <location>
        <begin position="119"/>
        <end position="157"/>
    </location>
</feature>
<feature type="region of interest" description="Disordered" evidence="1">
    <location>
        <begin position="216"/>
        <end position="298"/>
    </location>
</feature>
<feature type="region of interest" description="Disordered" evidence="1">
    <location>
        <begin position="313"/>
        <end position="365"/>
    </location>
</feature>
<feature type="compositionally biased region" description="Basic and acidic residues" evidence="1">
    <location>
        <begin position="326"/>
        <end position="340"/>
    </location>
</feature>
<feature type="splice variant" id="VSP_024876" description="In isoform 2." evidence="2">
    <location>
        <begin position="294"/>
        <end position="301"/>
    </location>
</feature>
<feature type="sequence conflict" description="In Ref. 2; BAC03795." evidence="3" ref="2">
    <original>R</original>
    <variation>W</variation>
    <location>
        <position position="311"/>
    </location>
</feature>
<proteinExistence type="evidence at protein level"/>